<dbReference type="EMBL" id="AP006852">
    <property type="protein sequence ID" value="BAE44650.1"/>
    <property type="molecule type" value="Genomic_DNA"/>
</dbReference>
<dbReference type="EMBL" id="CP017629">
    <property type="protein sequence ID" value="AOW30498.1"/>
    <property type="molecule type" value="Genomic_DNA"/>
</dbReference>
<dbReference type="RefSeq" id="XP_712482.1">
    <property type="nucleotide sequence ID" value="XM_707389.1"/>
</dbReference>
<dbReference type="SMR" id="Q59S42"/>
<dbReference type="FunCoup" id="Q59S42">
    <property type="interactions" value="453"/>
</dbReference>
<dbReference type="STRING" id="237561.Q59S42"/>
<dbReference type="EnsemblFungi" id="C7_01300C_A-T">
    <property type="protein sequence ID" value="C7_01300C_A-T-p1"/>
    <property type="gene ID" value="C7_01300C_A"/>
</dbReference>
<dbReference type="GeneID" id="3645894"/>
<dbReference type="KEGG" id="cal:CAALFM_C701300CA"/>
<dbReference type="CGD" id="CAL0000199213">
    <property type="gene designation" value="PSF1"/>
</dbReference>
<dbReference type="VEuPathDB" id="FungiDB:C7_01300C_A"/>
<dbReference type="eggNOG" id="KOG3303">
    <property type="taxonomic scope" value="Eukaryota"/>
</dbReference>
<dbReference type="HOGENOM" id="CLU_079191_0_0_1"/>
<dbReference type="InParanoid" id="Q59S42"/>
<dbReference type="OMA" id="MFCEKAT"/>
<dbReference type="OrthoDB" id="10252587at2759"/>
<dbReference type="Proteomes" id="UP000000559">
    <property type="component" value="Chromosome 7"/>
</dbReference>
<dbReference type="GO" id="GO:0071162">
    <property type="term" value="C:CMG complex"/>
    <property type="evidence" value="ECO:0007669"/>
    <property type="project" value="EnsemblFungi"/>
</dbReference>
<dbReference type="GO" id="GO:0000811">
    <property type="term" value="C:GINS complex"/>
    <property type="evidence" value="ECO:0000318"/>
    <property type="project" value="GO_Central"/>
</dbReference>
<dbReference type="GO" id="GO:0043596">
    <property type="term" value="C:nuclear replication fork"/>
    <property type="evidence" value="ECO:0007669"/>
    <property type="project" value="EnsemblFungi"/>
</dbReference>
<dbReference type="GO" id="GO:1902983">
    <property type="term" value="P:DNA strand elongation involved in mitotic DNA replication"/>
    <property type="evidence" value="ECO:0000318"/>
    <property type="project" value="GO_Central"/>
</dbReference>
<dbReference type="GO" id="GO:0000727">
    <property type="term" value="P:double-strand break repair via break-induced replication"/>
    <property type="evidence" value="ECO:0007669"/>
    <property type="project" value="EnsemblFungi"/>
</dbReference>
<dbReference type="GO" id="GO:1902975">
    <property type="term" value="P:mitotic DNA replication initiation"/>
    <property type="evidence" value="ECO:0007669"/>
    <property type="project" value="EnsemblFungi"/>
</dbReference>
<dbReference type="CDD" id="cd11710">
    <property type="entry name" value="GINS_A_psf1"/>
    <property type="match status" value="1"/>
</dbReference>
<dbReference type="CDD" id="cd21696">
    <property type="entry name" value="GINS_B_Psf1"/>
    <property type="match status" value="1"/>
</dbReference>
<dbReference type="Gene3D" id="1.20.58.1030">
    <property type="match status" value="1"/>
</dbReference>
<dbReference type="InterPro" id="IPR021151">
    <property type="entry name" value="GINS_A"/>
</dbReference>
<dbReference type="InterPro" id="IPR036224">
    <property type="entry name" value="GINS_bundle-like_dom_sf"/>
</dbReference>
<dbReference type="InterPro" id="IPR005339">
    <property type="entry name" value="GINS_Psf1"/>
</dbReference>
<dbReference type="InterPro" id="IPR056783">
    <property type="entry name" value="PSF1_C"/>
</dbReference>
<dbReference type="PANTHER" id="PTHR12914:SF2">
    <property type="entry name" value="DNA REPLICATION COMPLEX GINS PROTEIN PSF1"/>
    <property type="match status" value="1"/>
</dbReference>
<dbReference type="PANTHER" id="PTHR12914">
    <property type="entry name" value="PARTNER OF SLD5"/>
    <property type="match status" value="1"/>
</dbReference>
<dbReference type="Pfam" id="PF24997">
    <property type="entry name" value="PSF1_C"/>
    <property type="match status" value="1"/>
</dbReference>
<dbReference type="Pfam" id="PF05916">
    <property type="entry name" value="Sld5"/>
    <property type="match status" value="1"/>
</dbReference>
<dbReference type="SUPFAM" id="SSF158573">
    <property type="entry name" value="GINS helical bundle-like"/>
    <property type="match status" value="1"/>
</dbReference>
<protein>
    <recommendedName>
        <fullName>DNA replication complex GINS protein PSF1</fullName>
    </recommendedName>
</protein>
<gene>
    <name type="primary">PSF1</name>
    <name type="ordered locus">CAALFM_C701300CA</name>
    <name type="ORF">CaJ7.0144</name>
    <name type="ORF">CaO19.6910</name>
</gene>
<sequence length="236" mass="27078">MFGDTANKLILDAKRSSNLSAIPIYQSDLVKSIVRETNDLNKDAEYLVEEQEQLQETQDQENSKINQCQLFVTHLSMRRNKRCLLAYEKSRADKITEFCWLNIDPIETSTSSSTTSTNTNSNVNQSSSNNAVNPLTKNLSNYTTSLDMNNLNHHEQDFFKQYQDLIMEFKSSFEDIDLSGDLNPPTNIFIDVRVLKDGGEVTTEYGSFNLIKDSQFFVRKSDVERLIQQGYLEEII</sequence>
<name>PSF1_CANAL</name>
<proteinExistence type="inferred from homology"/>
<reference key="1">
    <citation type="journal article" date="2005" name="Genetics">
        <title>Sequence finishing and gene mapping for Candida albicans chromosome 7 and syntenic analysis against the Saccharomyces cerevisiae genome.</title>
        <authorList>
            <person name="Chibana H."/>
            <person name="Oka N."/>
            <person name="Nakayama H."/>
            <person name="Aoyama T."/>
            <person name="Magee B.B."/>
            <person name="Magee P.T."/>
            <person name="Mikami Y."/>
        </authorList>
    </citation>
    <scope>NUCLEOTIDE SEQUENCE [LARGE SCALE GENOMIC DNA]</scope>
    <source>
        <strain>SC5314 / ATCC MYA-2876</strain>
    </source>
</reference>
<reference key="2">
    <citation type="journal article" date="2004" name="Proc. Natl. Acad. Sci. U.S.A.">
        <title>The diploid genome sequence of Candida albicans.</title>
        <authorList>
            <person name="Jones T."/>
            <person name="Federspiel N.A."/>
            <person name="Chibana H."/>
            <person name="Dungan J."/>
            <person name="Kalman S."/>
            <person name="Magee B.B."/>
            <person name="Newport G."/>
            <person name="Thorstenson Y.R."/>
            <person name="Agabian N."/>
            <person name="Magee P.T."/>
            <person name="Davis R.W."/>
            <person name="Scherer S."/>
        </authorList>
    </citation>
    <scope>NUCLEOTIDE SEQUENCE [LARGE SCALE GENOMIC DNA]</scope>
    <source>
        <strain>SC5314 / ATCC MYA-2876</strain>
    </source>
</reference>
<reference key="3">
    <citation type="journal article" date="2007" name="Genome Biol.">
        <title>Assembly of the Candida albicans genome into sixteen supercontigs aligned on the eight chromosomes.</title>
        <authorList>
            <person name="van het Hoog M."/>
            <person name="Rast T.J."/>
            <person name="Martchenko M."/>
            <person name="Grindle S."/>
            <person name="Dignard D."/>
            <person name="Hogues H."/>
            <person name="Cuomo C."/>
            <person name="Berriman M."/>
            <person name="Scherer S."/>
            <person name="Magee B.B."/>
            <person name="Whiteway M."/>
            <person name="Chibana H."/>
            <person name="Nantel A."/>
            <person name="Magee P.T."/>
        </authorList>
    </citation>
    <scope>GENOME REANNOTATION</scope>
    <source>
        <strain>SC5314 / ATCC MYA-2876</strain>
    </source>
</reference>
<reference key="4">
    <citation type="journal article" date="2013" name="Genome Biol.">
        <title>Assembly of a phased diploid Candida albicans genome facilitates allele-specific measurements and provides a simple model for repeat and indel structure.</title>
        <authorList>
            <person name="Muzzey D."/>
            <person name="Schwartz K."/>
            <person name="Weissman J.S."/>
            <person name="Sherlock G."/>
        </authorList>
    </citation>
    <scope>NUCLEOTIDE SEQUENCE [LARGE SCALE GENOMIC DNA]</scope>
    <scope>GENOME REANNOTATION</scope>
    <source>
        <strain>SC5314 / ATCC MYA-2876</strain>
    </source>
</reference>
<accession>Q59S42</accession>
<accession>A0A1D8PQS4</accession>
<accession>Q3MPL0</accession>
<comment type="function">
    <text evidence="1">The GINS complex plays an essential role in the initiation of DNA replication.</text>
</comment>
<comment type="subunit">
    <text evidence="1">Component of the GINS complex which is a heterotetramer of SLD5, PSF1, PSF2 and PSF3.</text>
</comment>
<comment type="subcellular location">
    <subcellularLocation>
        <location evidence="1">Nucleus</location>
    </subcellularLocation>
</comment>
<comment type="similarity">
    <text evidence="3">Belongs to the GINS1/PSF1 family.</text>
</comment>
<organism>
    <name type="scientific">Candida albicans (strain SC5314 / ATCC MYA-2876)</name>
    <name type="common">Yeast</name>
    <dbReference type="NCBI Taxonomy" id="237561"/>
    <lineage>
        <taxon>Eukaryota</taxon>
        <taxon>Fungi</taxon>
        <taxon>Dikarya</taxon>
        <taxon>Ascomycota</taxon>
        <taxon>Saccharomycotina</taxon>
        <taxon>Pichiomycetes</taxon>
        <taxon>Debaryomycetaceae</taxon>
        <taxon>Candida/Lodderomyces clade</taxon>
        <taxon>Candida</taxon>
    </lineage>
</organism>
<keyword id="KW-0235">DNA replication</keyword>
<keyword id="KW-0539">Nucleus</keyword>
<keyword id="KW-1185">Reference proteome</keyword>
<feature type="chain" id="PRO_0000278395" description="DNA replication complex GINS protein PSF1">
    <location>
        <begin position="1"/>
        <end position="236"/>
    </location>
</feature>
<feature type="region of interest" description="Disordered" evidence="2">
    <location>
        <begin position="109"/>
        <end position="134"/>
    </location>
</feature>
<feature type="compositionally biased region" description="Low complexity" evidence="2">
    <location>
        <begin position="109"/>
        <end position="130"/>
    </location>
</feature>
<evidence type="ECO:0000250" key="1"/>
<evidence type="ECO:0000256" key="2">
    <source>
        <dbReference type="SAM" id="MobiDB-lite"/>
    </source>
</evidence>
<evidence type="ECO:0000305" key="3"/>